<dbReference type="EC" id="5.3.1.14" evidence="1"/>
<dbReference type="EMBL" id="CP000468">
    <property type="protein sequence ID" value="ABJ03370.1"/>
    <property type="molecule type" value="Genomic_DNA"/>
</dbReference>
<dbReference type="RefSeq" id="WP_001298699.1">
    <property type="nucleotide sequence ID" value="NZ_CADILS010000014.1"/>
</dbReference>
<dbReference type="SMR" id="A1AI80"/>
<dbReference type="KEGG" id="ecv:APECO1_2565"/>
<dbReference type="HOGENOM" id="CLU_052790_0_0_6"/>
<dbReference type="UniPathway" id="UPA00541">
    <property type="reaction ID" value="UER00601"/>
</dbReference>
<dbReference type="Proteomes" id="UP000008216">
    <property type="component" value="Chromosome"/>
</dbReference>
<dbReference type="GO" id="GO:0005737">
    <property type="term" value="C:cytoplasm"/>
    <property type="evidence" value="ECO:0007669"/>
    <property type="project" value="UniProtKB-SubCell"/>
</dbReference>
<dbReference type="GO" id="GO:0008740">
    <property type="term" value="F:L-rhamnose isomerase activity"/>
    <property type="evidence" value="ECO:0007669"/>
    <property type="project" value="UniProtKB-UniRule"/>
</dbReference>
<dbReference type="GO" id="GO:0030145">
    <property type="term" value="F:manganese ion binding"/>
    <property type="evidence" value="ECO:0007669"/>
    <property type="project" value="UniProtKB-UniRule"/>
</dbReference>
<dbReference type="GO" id="GO:0019324">
    <property type="term" value="P:L-lyxose metabolic process"/>
    <property type="evidence" value="ECO:0007669"/>
    <property type="project" value="TreeGrafter"/>
</dbReference>
<dbReference type="GO" id="GO:0019301">
    <property type="term" value="P:rhamnose catabolic process"/>
    <property type="evidence" value="ECO:0007669"/>
    <property type="project" value="UniProtKB-UniRule"/>
</dbReference>
<dbReference type="FunFam" id="3.20.20.150:FF:000006">
    <property type="entry name" value="L-rhamnose isomerase"/>
    <property type="match status" value="1"/>
</dbReference>
<dbReference type="Gene3D" id="3.20.20.150">
    <property type="entry name" value="Divalent-metal-dependent TIM barrel enzymes"/>
    <property type="match status" value="1"/>
</dbReference>
<dbReference type="HAMAP" id="MF_00541">
    <property type="entry name" value="RhaA"/>
    <property type="match status" value="1"/>
</dbReference>
<dbReference type="InterPro" id="IPR050337">
    <property type="entry name" value="L-rhamnose_isomerase"/>
</dbReference>
<dbReference type="InterPro" id="IPR009308">
    <property type="entry name" value="Rhamnose_isomerase"/>
</dbReference>
<dbReference type="InterPro" id="IPR036237">
    <property type="entry name" value="Xyl_isomerase-like_sf"/>
</dbReference>
<dbReference type="NCBIfam" id="NF002203">
    <property type="entry name" value="PRK01076.1"/>
    <property type="match status" value="1"/>
</dbReference>
<dbReference type="NCBIfam" id="TIGR01748">
    <property type="entry name" value="rhaA"/>
    <property type="match status" value="1"/>
</dbReference>
<dbReference type="PANTHER" id="PTHR30268">
    <property type="entry name" value="L-RHAMNOSE ISOMERASE"/>
    <property type="match status" value="1"/>
</dbReference>
<dbReference type="PANTHER" id="PTHR30268:SF0">
    <property type="entry name" value="L-RHAMNOSE ISOMERASE"/>
    <property type="match status" value="1"/>
</dbReference>
<dbReference type="Pfam" id="PF06134">
    <property type="entry name" value="RhaA"/>
    <property type="match status" value="1"/>
</dbReference>
<dbReference type="SUPFAM" id="SSF51658">
    <property type="entry name" value="Xylose isomerase-like"/>
    <property type="match status" value="1"/>
</dbReference>
<protein>
    <recommendedName>
        <fullName evidence="1">L-rhamnose isomerase</fullName>
        <ecNumber evidence="1">5.3.1.14</ecNumber>
    </recommendedName>
</protein>
<comment type="function">
    <text evidence="1">Catalyzes the interconversion of L-rhamnose and L-rhamnulose.</text>
</comment>
<comment type="catalytic activity">
    <reaction evidence="1">
        <text>L-rhamnopyranose = L-rhamnulose</text>
        <dbReference type="Rhea" id="RHEA:23160"/>
        <dbReference type="ChEBI" id="CHEBI:17897"/>
        <dbReference type="ChEBI" id="CHEBI:62346"/>
        <dbReference type="EC" id="5.3.1.14"/>
    </reaction>
</comment>
<comment type="cofactor">
    <cofactor evidence="1">
        <name>Mn(2+)</name>
        <dbReference type="ChEBI" id="CHEBI:29035"/>
    </cofactor>
    <text evidence="1">Binds 1 Mn(2+) ion per subunit.</text>
</comment>
<comment type="pathway">
    <text evidence="1">Carbohydrate degradation; L-rhamnose degradation; glycerone phosphate from L-rhamnose: step 1/3.</text>
</comment>
<comment type="subunit">
    <text evidence="1">Homotetramer.</text>
</comment>
<comment type="subcellular location">
    <subcellularLocation>
        <location evidence="1">Cytoplasm</location>
    </subcellularLocation>
</comment>
<comment type="similarity">
    <text evidence="1">Belongs to the rhamnose isomerase family.</text>
</comment>
<reference key="1">
    <citation type="journal article" date="2007" name="J. Bacteriol.">
        <title>The genome sequence of avian pathogenic Escherichia coli strain O1:K1:H7 shares strong similarities with human extraintestinal pathogenic E. coli genomes.</title>
        <authorList>
            <person name="Johnson T.J."/>
            <person name="Kariyawasam S."/>
            <person name="Wannemuehler Y."/>
            <person name="Mangiamele P."/>
            <person name="Johnson S.J."/>
            <person name="Doetkott C."/>
            <person name="Skyberg J.A."/>
            <person name="Lynne A.M."/>
            <person name="Johnson J.R."/>
            <person name="Nolan L.K."/>
        </authorList>
    </citation>
    <scope>NUCLEOTIDE SEQUENCE [LARGE SCALE GENOMIC DNA]</scope>
</reference>
<feature type="chain" id="PRO_1000017716" description="L-rhamnose isomerase">
    <location>
        <begin position="1"/>
        <end position="419"/>
    </location>
</feature>
<feature type="binding site" evidence="1">
    <location>
        <position position="262"/>
    </location>
    <ligand>
        <name>Mn(2+)</name>
        <dbReference type="ChEBI" id="CHEBI:29035"/>
    </ligand>
</feature>
<feature type="binding site" evidence="1">
    <location>
        <position position="294"/>
    </location>
    <ligand>
        <name>Mn(2+)</name>
        <dbReference type="ChEBI" id="CHEBI:29035"/>
    </ligand>
</feature>
<feature type="binding site" evidence="1">
    <location>
        <position position="296"/>
    </location>
    <ligand>
        <name>Mn(2+)</name>
        <dbReference type="ChEBI" id="CHEBI:29035"/>
    </ligand>
</feature>
<name>RHAA_ECOK1</name>
<gene>
    <name evidence="1" type="primary">rhaA</name>
    <name type="ordered locus">Ecok1_38760</name>
    <name type="ORF">APECO1_2565</name>
</gene>
<organism>
    <name type="scientific">Escherichia coli O1:K1 / APEC</name>
    <dbReference type="NCBI Taxonomy" id="405955"/>
    <lineage>
        <taxon>Bacteria</taxon>
        <taxon>Pseudomonadati</taxon>
        <taxon>Pseudomonadota</taxon>
        <taxon>Gammaproteobacteria</taxon>
        <taxon>Enterobacterales</taxon>
        <taxon>Enterobacteriaceae</taxon>
        <taxon>Escherichia</taxon>
    </lineage>
</organism>
<keyword id="KW-0963">Cytoplasm</keyword>
<keyword id="KW-0413">Isomerase</keyword>
<keyword id="KW-0464">Manganese</keyword>
<keyword id="KW-0479">Metal-binding</keyword>
<keyword id="KW-1185">Reference proteome</keyword>
<keyword id="KW-0684">Rhamnose metabolism</keyword>
<proteinExistence type="inferred from homology"/>
<sequence>MTTQLEQAWELAKQRFAAVGIDVEEALRQLDRLPVSMHCWQGDDVSGFENPEGSLTGGIQATGNYPGKARNASELRADLEQAMRLIPGPKRLNLHAIYLESDTPVSRDQIKPEHFKNWVEWAKANQLGLDFNPSCFSHPLSADGFTLSHADDRIRQFWIDHCKASRRVSAYFGEQLGTPSVMNIWIPDGMKDITVDRLAPRQRLLAALDEVISEKLNPAHHIDAVESKLFGIGAESYTVGSNEFYLGYATSRQTALCLDAGHFHPTEVISDKISAAMLYVPQLLLHVSRPVRWDSDHVVLLDDETQAIASEIVRHDLFDRVHIGLDFFDASINRIAAWVIGTRNMKKALLRALLEPTAELRKLEAAGDYTARLALLEEQKSLPWQAVWEMYCQRHDTPAGSEWLENVRTYEKEILSRRG</sequence>
<accession>A1AI80</accession>
<evidence type="ECO:0000255" key="1">
    <source>
        <dbReference type="HAMAP-Rule" id="MF_00541"/>
    </source>
</evidence>